<reference key="1">
    <citation type="journal article" date="1999" name="J. Biol. Chem.">
        <title>A fission yeast gene for mitochondrial sulfide oxidation.</title>
        <authorList>
            <person name="Vande Weghe J.G."/>
            <person name="Ow D.W."/>
        </authorList>
    </citation>
    <scope>NUCLEOTIDE SEQUENCE [GENOMIC DNA]</scope>
    <scope>FUNCTION</scope>
    <scope>COFACTOR</scope>
    <scope>SUBCELLULAR LOCATION</scope>
    <scope>VARIANT LYS-396</scope>
</reference>
<reference key="2">
    <citation type="submission" date="1997-10" db="EMBL/GenBank/DDBJ databases">
        <title>Molecular cloning of the gene involved in cadmium sensitivity of fission yeast Schizosaccharomyces pombe.</title>
        <authorList>
            <person name="Mutoh N."/>
            <person name="Kawabata M."/>
            <person name="Nakagawa C."/>
            <person name="Yamada K."/>
        </authorList>
    </citation>
    <scope>NUCLEOTIDE SEQUENCE [GENOMIC DNA]</scope>
</reference>
<reference key="3">
    <citation type="journal article" date="2002" name="Nature">
        <title>The genome sequence of Schizosaccharomyces pombe.</title>
        <authorList>
            <person name="Wood V."/>
            <person name="Gwilliam R."/>
            <person name="Rajandream M.A."/>
            <person name="Lyne M.H."/>
            <person name="Lyne R."/>
            <person name="Stewart A."/>
            <person name="Sgouros J.G."/>
            <person name="Peat N."/>
            <person name="Hayles J."/>
            <person name="Baker S.G."/>
            <person name="Basham D."/>
            <person name="Bowman S."/>
            <person name="Brooks K."/>
            <person name="Brown D."/>
            <person name="Brown S."/>
            <person name="Chillingworth T."/>
            <person name="Churcher C.M."/>
            <person name="Collins M."/>
            <person name="Connor R."/>
            <person name="Cronin A."/>
            <person name="Davis P."/>
            <person name="Feltwell T."/>
            <person name="Fraser A."/>
            <person name="Gentles S."/>
            <person name="Goble A."/>
            <person name="Hamlin N."/>
            <person name="Harris D.E."/>
            <person name="Hidalgo J."/>
            <person name="Hodgson G."/>
            <person name="Holroyd S."/>
            <person name="Hornsby T."/>
            <person name="Howarth S."/>
            <person name="Huckle E.J."/>
            <person name="Hunt S."/>
            <person name="Jagels K."/>
            <person name="James K.D."/>
            <person name="Jones L."/>
            <person name="Jones M."/>
            <person name="Leather S."/>
            <person name="McDonald S."/>
            <person name="McLean J."/>
            <person name="Mooney P."/>
            <person name="Moule S."/>
            <person name="Mungall K.L."/>
            <person name="Murphy L.D."/>
            <person name="Niblett D."/>
            <person name="Odell C."/>
            <person name="Oliver K."/>
            <person name="O'Neil S."/>
            <person name="Pearson D."/>
            <person name="Quail M.A."/>
            <person name="Rabbinowitsch E."/>
            <person name="Rutherford K.M."/>
            <person name="Rutter S."/>
            <person name="Saunders D."/>
            <person name="Seeger K."/>
            <person name="Sharp S."/>
            <person name="Skelton J."/>
            <person name="Simmonds M.N."/>
            <person name="Squares R."/>
            <person name="Squares S."/>
            <person name="Stevens K."/>
            <person name="Taylor K."/>
            <person name="Taylor R.G."/>
            <person name="Tivey A."/>
            <person name="Walsh S.V."/>
            <person name="Warren T."/>
            <person name="Whitehead S."/>
            <person name="Woodward J.R."/>
            <person name="Volckaert G."/>
            <person name="Aert R."/>
            <person name="Robben J."/>
            <person name="Grymonprez B."/>
            <person name="Weltjens I."/>
            <person name="Vanstreels E."/>
            <person name="Rieger M."/>
            <person name="Schaefer M."/>
            <person name="Mueller-Auer S."/>
            <person name="Gabel C."/>
            <person name="Fuchs M."/>
            <person name="Duesterhoeft A."/>
            <person name="Fritzc C."/>
            <person name="Holzer E."/>
            <person name="Moestl D."/>
            <person name="Hilbert H."/>
            <person name="Borzym K."/>
            <person name="Langer I."/>
            <person name="Beck A."/>
            <person name="Lehrach H."/>
            <person name="Reinhardt R."/>
            <person name="Pohl T.M."/>
            <person name="Eger P."/>
            <person name="Zimmermann W."/>
            <person name="Wedler H."/>
            <person name="Wambutt R."/>
            <person name="Purnelle B."/>
            <person name="Goffeau A."/>
            <person name="Cadieu E."/>
            <person name="Dreano S."/>
            <person name="Gloux S."/>
            <person name="Lelaure V."/>
            <person name="Mottier S."/>
            <person name="Galibert F."/>
            <person name="Aves S.J."/>
            <person name="Xiang Z."/>
            <person name="Hunt C."/>
            <person name="Moore K."/>
            <person name="Hurst S.M."/>
            <person name="Lucas M."/>
            <person name="Rochet M."/>
            <person name="Gaillardin C."/>
            <person name="Tallada V.A."/>
            <person name="Garzon A."/>
            <person name="Thode G."/>
            <person name="Daga R.R."/>
            <person name="Cruzado L."/>
            <person name="Jimenez J."/>
            <person name="Sanchez M."/>
            <person name="del Rey F."/>
            <person name="Benito J."/>
            <person name="Dominguez A."/>
            <person name="Revuelta J.L."/>
            <person name="Moreno S."/>
            <person name="Armstrong J."/>
            <person name="Forsburg S.L."/>
            <person name="Cerutti L."/>
            <person name="Lowe T."/>
            <person name="McCombie W.R."/>
            <person name="Paulsen I."/>
            <person name="Potashkin J."/>
            <person name="Shpakovski G.V."/>
            <person name="Ussery D."/>
            <person name="Barrell B.G."/>
            <person name="Nurse P."/>
        </authorList>
    </citation>
    <scope>NUCLEOTIDE SEQUENCE [LARGE SCALE GENOMIC DNA]</scope>
    <source>
        <strain>972 / ATCC 24843</strain>
    </source>
</reference>
<feature type="transit peptide" description="Mitochondrion" evidence="3">
    <location>
        <begin position="1"/>
        <end position="24"/>
    </location>
</feature>
<feature type="chain" id="PRO_0000021446" description="Sulfide:quinone oxidoreductase, mitochondrial">
    <location>
        <begin position="25"/>
        <end position="459"/>
    </location>
</feature>
<feature type="active site" description="Cysteine persulfide intermediate" evidence="2">
    <location>
        <position position="204"/>
    </location>
</feature>
<feature type="active site" description="Cysteine persulfide intermediate" evidence="2">
    <location>
        <position position="383"/>
    </location>
</feature>
<feature type="binding site" evidence="1">
    <location>
        <begin position="35"/>
        <end position="39"/>
    </location>
    <ligand>
        <name>FAD</name>
        <dbReference type="ChEBI" id="CHEBI:57692"/>
    </ligand>
</feature>
<feature type="sequence variant" description="In cadmium sensitive strain." evidence="4">
    <original>E</original>
    <variation>K</variation>
    <location>
        <position position="396"/>
    </location>
</feature>
<gene>
    <name type="primary">hmt2</name>
    <name type="synonym">cad1</name>
    <name type="ORF">SPBC2G5.06c</name>
</gene>
<accession>O94284</accession>
<accession>O13293</accession>
<dbReference type="EC" id="1.8.5.-" evidence="4"/>
<dbReference type="EMBL" id="AF042283">
    <property type="protein sequence ID" value="AAD41159.1"/>
    <property type="molecule type" value="Genomic_DNA"/>
</dbReference>
<dbReference type="EMBL" id="AB007905">
    <property type="protein sequence ID" value="BAA22793.1"/>
    <property type="status" value="ALT_SEQ"/>
    <property type="molecule type" value="Genomic_DNA"/>
</dbReference>
<dbReference type="EMBL" id="CU329671">
    <property type="protein sequence ID" value="CAA21882.1"/>
    <property type="molecule type" value="Genomic_DNA"/>
</dbReference>
<dbReference type="PIR" id="T43278">
    <property type="entry name" value="T43278"/>
</dbReference>
<dbReference type="PIR" id="T43558">
    <property type="entry name" value="T43558"/>
</dbReference>
<dbReference type="RefSeq" id="NP_596067.1">
    <property type="nucleotide sequence ID" value="NM_001021978.2"/>
</dbReference>
<dbReference type="SMR" id="O94284"/>
<dbReference type="BioGRID" id="276856">
    <property type="interactions" value="88"/>
</dbReference>
<dbReference type="FunCoup" id="O94284">
    <property type="interactions" value="281"/>
</dbReference>
<dbReference type="STRING" id="284812.O94284"/>
<dbReference type="iPTMnet" id="O94284"/>
<dbReference type="PaxDb" id="4896-SPBC2G5.06c.1"/>
<dbReference type="EnsemblFungi" id="SPBC2G5.06c.1">
    <property type="protein sequence ID" value="SPBC2G5.06c.1:pep"/>
    <property type="gene ID" value="SPBC2G5.06c"/>
</dbReference>
<dbReference type="GeneID" id="2540326"/>
<dbReference type="KEGG" id="spo:2540326"/>
<dbReference type="PomBase" id="SPBC2G5.06c">
    <property type="gene designation" value="hmt2"/>
</dbReference>
<dbReference type="VEuPathDB" id="FungiDB:SPBC2G5.06c"/>
<dbReference type="eggNOG" id="KOG3851">
    <property type="taxonomic scope" value="Eukaryota"/>
</dbReference>
<dbReference type="HOGENOM" id="CLU_030742_2_2_1"/>
<dbReference type="InParanoid" id="O94284"/>
<dbReference type="OMA" id="ERYSMFI"/>
<dbReference type="PhylomeDB" id="O94284"/>
<dbReference type="BRENDA" id="1.8.5.4">
    <property type="organism ID" value="5613"/>
</dbReference>
<dbReference type="PRO" id="PR:O94284"/>
<dbReference type="Proteomes" id="UP000002485">
    <property type="component" value="Chromosome II"/>
</dbReference>
<dbReference type="GO" id="GO:0005739">
    <property type="term" value="C:mitochondrion"/>
    <property type="evidence" value="ECO:0000314"/>
    <property type="project" value="PomBase"/>
</dbReference>
<dbReference type="GO" id="GO:0071949">
    <property type="term" value="F:FAD binding"/>
    <property type="evidence" value="ECO:0000314"/>
    <property type="project" value="PomBase"/>
</dbReference>
<dbReference type="GO" id="GO:0048038">
    <property type="term" value="F:quinone binding"/>
    <property type="evidence" value="ECO:0007669"/>
    <property type="project" value="UniProtKB-KW"/>
</dbReference>
<dbReference type="GO" id="GO:0070224">
    <property type="term" value="F:sulfide:quinone oxidoreductase activity"/>
    <property type="evidence" value="ECO:0000314"/>
    <property type="project" value="PomBase"/>
</dbReference>
<dbReference type="GO" id="GO:0098849">
    <property type="term" value="P:cellular detoxification of cadmium ion"/>
    <property type="evidence" value="ECO:0000315"/>
    <property type="project" value="PomBase"/>
</dbReference>
<dbReference type="GO" id="GO:0071276">
    <property type="term" value="P:cellular response to cadmium ion"/>
    <property type="evidence" value="ECO:0000315"/>
    <property type="project" value="PomBase"/>
</dbReference>
<dbReference type="GO" id="GO:0006750">
    <property type="term" value="P:glutathione biosynthetic process"/>
    <property type="evidence" value="ECO:0000315"/>
    <property type="project" value="PomBase"/>
</dbReference>
<dbReference type="GO" id="GO:0046938">
    <property type="term" value="P:phytochelatin biosynthetic process"/>
    <property type="evidence" value="ECO:0000315"/>
    <property type="project" value="PomBase"/>
</dbReference>
<dbReference type="GO" id="GO:0070221">
    <property type="term" value="P:sulfide oxidation, using sulfide:quinone oxidoreductase"/>
    <property type="evidence" value="ECO:0000318"/>
    <property type="project" value="GO_Central"/>
</dbReference>
<dbReference type="FunFam" id="3.50.50.60:FF:000034">
    <property type="entry name" value="sulfide:quinone oxidoreductase, mitochondrial"/>
    <property type="match status" value="1"/>
</dbReference>
<dbReference type="Gene3D" id="3.50.50.60">
    <property type="entry name" value="FAD/NAD(P)-binding domain"/>
    <property type="match status" value="2"/>
</dbReference>
<dbReference type="InterPro" id="IPR036188">
    <property type="entry name" value="FAD/NAD-bd_sf"/>
</dbReference>
<dbReference type="InterPro" id="IPR015904">
    <property type="entry name" value="Sulphide_quinone_reductase"/>
</dbReference>
<dbReference type="PANTHER" id="PTHR10632">
    <property type="entry name" value="SULFIDE:QUINONE OXIDOREDUCTASE"/>
    <property type="match status" value="1"/>
</dbReference>
<dbReference type="PANTHER" id="PTHR10632:SF2">
    <property type="entry name" value="SULFIDE:QUINONE OXIDOREDUCTASE, MITOCHONDRIAL"/>
    <property type="match status" value="1"/>
</dbReference>
<dbReference type="PRINTS" id="PR00368">
    <property type="entry name" value="FADPNR"/>
</dbReference>
<dbReference type="SUPFAM" id="SSF51905">
    <property type="entry name" value="FAD/NAD(P)-binding domain"/>
    <property type="match status" value="2"/>
</dbReference>
<sequence>MLTLNSTIKSVTGSFQSASMLARFASTHHKVLVVGGGSAGISVAHQIYNKFSKYRFANDQGKDTSLKPGEIGIVDGAKYHYYQPGWTLTGAGLSSVAKTRRELASLVPADKFKLHPEFVKSLHPRENKIVTQSGQEISYDYLVMAAGIYTDFGRIKGLTEALDDPNTPVVTIYSEKYADAVYPWIEKTKSGNAIFTQPSGVLKCAGAPQKIMWMAEDYWRRHKVRSNIDVSFYTGMPTLFSVKRYSDALLRQNEQLHRNVKINYKDELVEVKGSERKAVFKNLNDGSLFERPFDLLHAVPSMRSHEFIAKSDLADKSGFVAVDQSTTQSTKFPNVFAIGDCSGLPTSKTYAAITAQAPVMVHNLWSFVNGKNLTASYNGYTSCPLLTGYGKLILAEFLYKQEPKESFGRFSRFLDQTVPRRMFYHLKKDFFPFVYWNFAVRNGKWYGSRGLIPPHFPVN</sequence>
<proteinExistence type="inferred from homology"/>
<evidence type="ECO:0000250" key="1">
    <source>
        <dbReference type="UniProtKB" id="O67931"/>
    </source>
</evidence>
<evidence type="ECO:0000250" key="2">
    <source>
        <dbReference type="UniProtKB" id="Q7ZAG8"/>
    </source>
</evidence>
<evidence type="ECO:0000255" key="3"/>
<evidence type="ECO:0000269" key="4">
    <source>
    </source>
</evidence>
<evidence type="ECO:0000305" key="5"/>
<comment type="function">
    <text evidence="4">Catalyzes the oxidation of hydrogen sulfide, with the help of a quinone.</text>
</comment>
<comment type="cofactor">
    <cofactor evidence="4">
        <name>FAD</name>
        <dbReference type="ChEBI" id="CHEBI:57692"/>
    </cofactor>
    <text evidence="4">Binds 1 FAD per subunit.</text>
</comment>
<comment type="subcellular location">
    <subcellularLocation>
        <location evidence="4">Mitochondrion</location>
    </subcellularLocation>
</comment>
<comment type="similarity">
    <text evidence="5">Belongs to the SQRD family.</text>
</comment>
<comment type="sequence caution" evidence="5">
    <conflict type="frameshift">
        <sequence resource="EMBL-CDS" id="BAA22793"/>
    </conflict>
</comment>
<comment type="sequence caution" evidence="5">
    <conflict type="miscellaneous discrepancy">
        <sequence resource="EMBL-CDS" id="BAA22793"/>
    </conflict>
    <text>Sequencing errors.</text>
</comment>
<protein>
    <recommendedName>
        <fullName>Sulfide:quinone oxidoreductase, mitochondrial</fullName>
        <ecNumber evidence="4">1.8.5.-</ecNumber>
    </recommendedName>
    <alternativeName>
        <fullName>Cadmium resistance protein 1</fullName>
    </alternativeName>
    <alternativeName>
        <fullName>Heavy metal tolerance protein 2</fullName>
    </alternativeName>
</protein>
<name>HMT2_SCHPO</name>
<keyword id="KW-0104">Cadmium</keyword>
<keyword id="KW-0274">FAD</keyword>
<keyword id="KW-0285">Flavoprotein</keyword>
<keyword id="KW-0496">Mitochondrion</keyword>
<keyword id="KW-0560">Oxidoreductase</keyword>
<keyword id="KW-0874">Quinone</keyword>
<keyword id="KW-1185">Reference proteome</keyword>
<keyword id="KW-0809">Transit peptide</keyword>
<organism>
    <name type="scientific">Schizosaccharomyces pombe (strain 972 / ATCC 24843)</name>
    <name type="common">Fission yeast</name>
    <dbReference type="NCBI Taxonomy" id="284812"/>
    <lineage>
        <taxon>Eukaryota</taxon>
        <taxon>Fungi</taxon>
        <taxon>Dikarya</taxon>
        <taxon>Ascomycota</taxon>
        <taxon>Taphrinomycotina</taxon>
        <taxon>Schizosaccharomycetes</taxon>
        <taxon>Schizosaccharomycetales</taxon>
        <taxon>Schizosaccharomycetaceae</taxon>
        <taxon>Schizosaccharomyces</taxon>
    </lineage>
</organism>